<evidence type="ECO:0000255" key="1">
    <source>
        <dbReference type="HAMAP-Rule" id="MF_00344"/>
    </source>
</evidence>
<keyword id="KW-0067">ATP-binding</keyword>
<keyword id="KW-0315">Glutamine amidotransferase</keyword>
<keyword id="KW-0332">GMP biosynthesis</keyword>
<keyword id="KW-0436">Ligase</keyword>
<keyword id="KW-0547">Nucleotide-binding</keyword>
<keyword id="KW-0658">Purine biosynthesis</keyword>
<protein>
    <recommendedName>
        <fullName evidence="1">GMP synthase [glutamine-hydrolyzing]</fullName>
        <ecNumber evidence="1">6.3.5.2</ecNumber>
    </recommendedName>
    <alternativeName>
        <fullName evidence="1">GMP synthetase</fullName>
    </alternativeName>
    <alternativeName>
        <fullName evidence="1">Glutamine amidotransferase</fullName>
    </alternativeName>
</protein>
<feature type="chain" id="PRO_1000190238" description="GMP synthase [glutamine-hydrolyzing]">
    <location>
        <begin position="1"/>
        <end position="525"/>
    </location>
</feature>
<feature type="domain" description="Glutamine amidotransferase type-1" evidence="1">
    <location>
        <begin position="9"/>
        <end position="207"/>
    </location>
</feature>
<feature type="domain" description="GMPS ATP-PPase" evidence="1">
    <location>
        <begin position="208"/>
        <end position="400"/>
    </location>
</feature>
<feature type="active site" description="Nucleophile" evidence="1">
    <location>
        <position position="86"/>
    </location>
</feature>
<feature type="active site" evidence="1">
    <location>
        <position position="181"/>
    </location>
</feature>
<feature type="active site" evidence="1">
    <location>
        <position position="183"/>
    </location>
</feature>
<feature type="binding site" evidence="1">
    <location>
        <begin position="235"/>
        <end position="241"/>
    </location>
    <ligand>
        <name>ATP</name>
        <dbReference type="ChEBI" id="CHEBI:30616"/>
    </ligand>
</feature>
<accession>B7MYD5</accession>
<dbReference type="EC" id="6.3.5.2" evidence="1"/>
<dbReference type="EMBL" id="CU928162">
    <property type="protein sequence ID" value="CAR09101.2"/>
    <property type="molecule type" value="Genomic_DNA"/>
</dbReference>
<dbReference type="RefSeq" id="WP_000138282.1">
    <property type="nucleotide sequence ID" value="NC_011745.1"/>
</dbReference>
<dbReference type="SMR" id="B7MYD5"/>
<dbReference type="MEROPS" id="C26.957"/>
<dbReference type="GeneID" id="75172615"/>
<dbReference type="KEGG" id="ecq:ECED1_2931"/>
<dbReference type="HOGENOM" id="CLU_014340_0_5_6"/>
<dbReference type="UniPathway" id="UPA00189">
    <property type="reaction ID" value="UER00296"/>
</dbReference>
<dbReference type="Proteomes" id="UP000000748">
    <property type="component" value="Chromosome"/>
</dbReference>
<dbReference type="GO" id="GO:0005829">
    <property type="term" value="C:cytosol"/>
    <property type="evidence" value="ECO:0007669"/>
    <property type="project" value="TreeGrafter"/>
</dbReference>
<dbReference type="GO" id="GO:0005524">
    <property type="term" value="F:ATP binding"/>
    <property type="evidence" value="ECO:0007669"/>
    <property type="project" value="UniProtKB-UniRule"/>
</dbReference>
<dbReference type="GO" id="GO:0003921">
    <property type="term" value="F:GMP synthase activity"/>
    <property type="evidence" value="ECO:0007669"/>
    <property type="project" value="InterPro"/>
</dbReference>
<dbReference type="CDD" id="cd01742">
    <property type="entry name" value="GATase1_GMP_Synthase"/>
    <property type="match status" value="1"/>
</dbReference>
<dbReference type="CDD" id="cd01997">
    <property type="entry name" value="GMP_synthase_C"/>
    <property type="match status" value="1"/>
</dbReference>
<dbReference type="FunFam" id="3.30.300.10:FF:000002">
    <property type="entry name" value="GMP synthase [glutamine-hydrolyzing]"/>
    <property type="match status" value="1"/>
</dbReference>
<dbReference type="FunFam" id="3.40.50.620:FF:000001">
    <property type="entry name" value="GMP synthase [glutamine-hydrolyzing]"/>
    <property type="match status" value="1"/>
</dbReference>
<dbReference type="FunFam" id="3.40.50.880:FF:000001">
    <property type="entry name" value="GMP synthase [glutamine-hydrolyzing]"/>
    <property type="match status" value="1"/>
</dbReference>
<dbReference type="Gene3D" id="3.30.300.10">
    <property type="match status" value="1"/>
</dbReference>
<dbReference type="Gene3D" id="3.40.50.880">
    <property type="match status" value="1"/>
</dbReference>
<dbReference type="Gene3D" id="3.40.50.620">
    <property type="entry name" value="HUPs"/>
    <property type="match status" value="1"/>
</dbReference>
<dbReference type="HAMAP" id="MF_00344">
    <property type="entry name" value="GMP_synthase"/>
    <property type="match status" value="1"/>
</dbReference>
<dbReference type="InterPro" id="IPR029062">
    <property type="entry name" value="Class_I_gatase-like"/>
</dbReference>
<dbReference type="InterPro" id="IPR017926">
    <property type="entry name" value="GATASE"/>
</dbReference>
<dbReference type="InterPro" id="IPR001674">
    <property type="entry name" value="GMP_synth_C"/>
</dbReference>
<dbReference type="InterPro" id="IPR004739">
    <property type="entry name" value="GMP_synth_GATase"/>
</dbReference>
<dbReference type="InterPro" id="IPR022955">
    <property type="entry name" value="GMP_synthase"/>
</dbReference>
<dbReference type="InterPro" id="IPR025777">
    <property type="entry name" value="GMPS_ATP_PPase_dom"/>
</dbReference>
<dbReference type="InterPro" id="IPR022310">
    <property type="entry name" value="NAD/GMP_synthase"/>
</dbReference>
<dbReference type="InterPro" id="IPR014729">
    <property type="entry name" value="Rossmann-like_a/b/a_fold"/>
</dbReference>
<dbReference type="NCBIfam" id="TIGR00884">
    <property type="entry name" value="guaA_Cterm"/>
    <property type="match status" value="1"/>
</dbReference>
<dbReference type="NCBIfam" id="TIGR00888">
    <property type="entry name" value="guaA_Nterm"/>
    <property type="match status" value="1"/>
</dbReference>
<dbReference type="NCBIfam" id="NF000848">
    <property type="entry name" value="PRK00074.1"/>
    <property type="match status" value="1"/>
</dbReference>
<dbReference type="PANTHER" id="PTHR11922:SF2">
    <property type="entry name" value="GMP SYNTHASE [GLUTAMINE-HYDROLYZING]"/>
    <property type="match status" value="1"/>
</dbReference>
<dbReference type="PANTHER" id="PTHR11922">
    <property type="entry name" value="GMP SYNTHASE-RELATED"/>
    <property type="match status" value="1"/>
</dbReference>
<dbReference type="Pfam" id="PF00117">
    <property type="entry name" value="GATase"/>
    <property type="match status" value="1"/>
</dbReference>
<dbReference type="Pfam" id="PF00958">
    <property type="entry name" value="GMP_synt_C"/>
    <property type="match status" value="1"/>
</dbReference>
<dbReference type="Pfam" id="PF02540">
    <property type="entry name" value="NAD_synthase"/>
    <property type="match status" value="1"/>
</dbReference>
<dbReference type="PRINTS" id="PR00097">
    <property type="entry name" value="ANTSNTHASEII"/>
</dbReference>
<dbReference type="PRINTS" id="PR00099">
    <property type="entry name" value="CPSGATASE"/>
</dbReference>
<dbReference type="PRINTS" id="PR00096">
    <property type="entry name" value="GATASE"/>
</dbReference>
<dbReference type="SUPFAM" id="SSF52402">
    <property type="entry name" value="Adenine nucleotide alpha hydrolases-like"/>
    <property type="match status" value="1"/>
</dbReference>
<dbReference type="SUPFAM" id="SSF52317">
    <property type="entry name" value="Class I glutamine amidotransferase-like"/>
    <property type="match status" value="1"/>
</dbReference>
<dbReference type="SUPFAM" id="SSF54810">
    <property type="entry name" value="GMP synthetase C-terminal dimerisation domain"/>
    <property type="match status" value="1"/>
</dbReference>
<dbReference type="PROSITE" id="PS51273">
    <property type="entry name" value="GATASE_TYPE_1"/>
    <property type="match status" value="1"/>
</dbReference>
<dbReference type="PROSITE" id="PS51553">
    <property type="entry name" value="GMPS_ATP_PPASE"/>
    <property type="match status" value="1"/>
</dbReference>
<proteinExistence type="inferred from homology"/>
<sequence length="525" mass="58665">MTENIHKHRILILDFGSQYTQLVARRVRELGVYCELWAWDVTEAQIRDFNPSGIILSGGPESTTEENSPRAPQYVFEAGVPVFGVCYGMQTMAMQLGGHVEASNEREFGYAQVEVVNDSALVRGIEDALTADGKPLLDVWMSHGDKVTAIPSDFVTVASTESCPFAIMANEEKRFYGVQFHPEVTHTRQGMRMLERFVRDICQCEALWTPAKIIDDAVARIREQVGDDKVILGLSGGVDSSVTAMLLHRAIGKNLTCVFVDNGLLRLNEAEQVLDMFGDHFGLNIVHVPAEDRFLSALAGENDPEAKRKIIGRVFVEVFDEEALKLEDVKWLAQGTIYPDVIESAASATGKAHVIKSHHNVGGLPKEMKMGLVEPLKELFKDEVRKIGLELGLPYDMLYRHPFPGPGLGVRVLGEVKKEYCDLLRRADAIFIEELRKADLYDKVSQAFTVFLPVRSVGVMGDGRKYDWVVSLRAVETIDFMTAHWAHLPYDFLGRVSNRIINEVNGISRVVYDISGKPPATIEWE</sequence>
<reference key="1">
    <citation type="journal article" date="2009" name="PLoS Genet.">
        <title>Organised genome dynamics in the Escherichia coli species results in highly diverse adaptive paths.</title>
        <authorList>
            <person name="Touchon M."/>
            <person name="Hoede C."/>
            <person name="Tenaillon O."/>
            <person name="Barbe V."/>
            <person name="Baeriswyl S."/>
            <person name="Bidet P."/>
            <person name="Bingen E."/>
            <person name="Bonacorsi S."/>
            <person name="Bouchier C."/>
            <person name="Bouvet O."/>
            <person name="Calteau A."/>
            <person name="Chiapello H."/>
            <person name="Clermont O."/>
            <person name="Cruveiller S."/>
            <person name="Danchin A."/>
            <person name="Diard M."/>
            <person name="Dossat C."/>
            <person name="Karoui M.E."/>
            <person name="Frapy E."/>
            <person name="Garry L."/>
            <person name="Ghigo J.M."/>
            <person name="Gilles A.M."/>
            <person name="Johnson J."/>
            <person name="Le Bouguenec C."/>
            <person name="Lescat M."/>
            <person name="Mangenot S."/>
            <person name="Martinez-Jehanne V."/>
            <person name="Matic I."/>
            <person name="Nassif X."/>
            <person name="Oztas S."/>
            <person name="Petit M.A."/>
            <person name="Pichon C."/>
            <person name="Rouy Z."/>
            <person name="Ruf C.S."/>
            <person name="Schneider D."/>
            <person name="Tourret J."/>
            <person name="Vacherie B."/>
            <person name="Vallenet D."/>
            <person name="Medigue C."/>
            <person name="Rocha E.P.C."/>
            <person name="Denamur E."/>
        </authorList>
    </citation>
    <scope>NUCLEOTIDE SEQUENCE [LARGE SCALE GENOMIC DNA]</scope>
    <source>
        <strain>ED1a</strain>
    </source>
</reference>
<name>GUAA_ECO81</name>
<organism>
    <name type="scientific">Escherichia coli O81 (strain ED1a)</name>
    <dbReference type="NCBI Taxonomy" id="585397"/>
    <lineage>
        <taxon>Bacteria</taxon>
        <taxon>Pseudomonadati</taxon>
        <taxon>Pseudomonadota</taxon>
        <taxon>Gammaproteobacteria</taxon>
        <taxon>Enterobacterales</taxon>
        <taxon>Enterobacteriaceae</taxon>
        <taxon>Escherichia</taxon>
    </lineage>
</organism>
<comment type="function">
    <text evidence="1">Catalyzes the synthesis of GMP from XMP.</text>
</comment>
<comment type="catalytic activity">
    <reaction evidence="1">
        <text>XMP + L-glutamine + ATP + H2O = GMP + L-glutamate + AMP + diphosphate + 2 H(+)</text>
        <dbReference type="Rhea" id="RHEA:11680"/>
        <dbReference type="ChEBI" id="CHEBI:15377"/>
        <dbReference type="ChEBI" id="CHEBI:15378"/>
        <dbReference type="ChEBI" id="CHEBI:29985"/>
        <dbReference type="ChEBI" id="CHEBI:30616"/>
        <dbReference type="ChEBI" id="CHEBI:33019"/>
        <dbReference type="ChEBI" id="CHEBI:57464"/>
        <dbReference type="ChEBI" id="CHEBI:58115"/>
        <dbReference type="ChEBI" id="CHEBI:58359"/>
        <dbReference type="ChEBI" id="CHEBI:456215"/>
        <dbReference type="EC" id="6.3.5.2"/>
    </reaction>
</comment>
<comment type="pathway">
    <text evidence="1">Purine metabolism; GMP biosynthesis; GMP from XMP (L-Gln route): step 1/1.</text>
</comment>
<comment type="subunit">
    <text evidence="1">Homodimer.</text>
</comment>
<gene>
    <name evidence="1" type="primary">guaA</name>
    <name type="ordered locus">ECED1_2931</name>
</gene>